<accession>C3JYT1</accession>
<name>SYDND_PSEFS</name>
<gene>
    <name evidence="1" type="primary">aspS</name>
    <name type="ordered locus">PFLU_4917</name>
</gene>
<reference key="1">
    <citation type="journal article" date="2009" name="Genome Biol.">
        <title>Genomic and genetic analyses of diversity and plant interactions of Pseudomonas fluorescens.</title>
        <authorList>
            <person name="Silby M.W."/>
            <person name="Cerdeno-Tarraga A.M."/>
            <person name="Vernikos G.S."/>
            <person name="Giddens S.R."/>
            <person name="Jackson R.W."/>
            <person name="Preston G.M."/>
            <person name="Zhang X.-X."/>
            <person name="Moon C.D."/>
            <person name="Gehrig S.M."/>
            <person name="Godfrey S.A.C."/>
            <person name="Knight C.G."/>
            <person name="Malone J.G."/>
            <person name="Robinson Z."/>
            <person name="Spiers A.J."/>
            <person name="Harris S."/>
            <person name="Challis G.L."/>
            <person name="Yaxley A.M."/>
            <person name="Harris D."/>
            <person name="Seeger K."/>
            <person name="Murphy L."/>
            <person name="Rutter S."/>
            <person name="Squares R."/>
            <person name="Quail M.A."/>
            <person name="Saunders E."/>
            <person name="Mavromatis K."/>
            <person name="Brettin T.S."/>
            <person name="Bentley S.D."/>
            <person name="Hothersall J."/>
            <person name="Stephens E."/>
            <person name="Thomas C.M."/>
            <person name="Parkhill J."/>
            <person name="Levy S.B."/>
            <person name="Rainey P.B."/>
            <person name="Thomson N.R."/>
        </authorList>
    </citation>
    <scope>NUCLEOTIDE SEQUENCE [LARGE SCALE GENOMIC DNA]</scope>
    <source>
        <strain>SBW25</strain>
    </source>
</reference>
<comment type="function">
    <text evidence="1">Aspartyl-tRNA synthetase with relaxed tRNA specificity since it is able to aspartylate not only its cognate tRNA(Asp) but also tRNA(Asn). Reaction proceeds in two steps: L-aspartate is first activated by ATP to form Asp-AMP and then transferred to the acceptor end of tRNA(Asp/Asn).</text>
</comment>
<comment type="catalytic activity">
    <reaction evidence="1">
        <text>tRNA(Asx) + L-aspartate + ATP = L-aspartyl-tRNA(Asx) + AMP + diphosphate</text>
        <dbReference type="Rhea" id="RHEA:18349"/>
        <dbReference type="Rhea" id="RHEA-COMP:9710"/>
        <dbReference type="Rhea" id="RHEA-COMP:9711"/>
        <dbReference type="ChEBI" id="CHEBI:29991"/>
        <dbReference type="ChEBI" id="CHEBI:30616"/>
        <dbReference type="ChEBI" id="CHEBI:33019"/>
        <dbReference type="ChEBI" id="CHEBI:78442"/>
        <dbReference type="ChEBI" id="CHEBI:78516"/>
        <dbReference type="ChEBI" id="CHEBI:456215"/>
        <dbReference type="EC" id="6.1.1.23"/>
    </reaction>
</comment>
<comment type="subunit">
    <text evidence="1">Homodimer.</text>
</comment>
<comment type="subcellular location">
    <subcellularLocation>
        <location evidence="1">Cytoplasm</location>
    </subcellularLocation>
</comment>
<comment type="similarity">
    <text evidence="1">Belongs to the class-II aminoacyl-tRNA synthetase family. Type 1 subfamily.</text>
</comment>
<feature type="chain" id="PRO_1000202165" description="Aspartate--tRNA(Asp/Asn) ligase">
    <location>
        <begin position="1"/>
        <end position="591"/>
    </location>
</feature>
<feature type="region of interest" description="Aspartate" evidence="1">
    <location>
        <begin position="198"/>
        <end position="201"/>
    </location>
</feature>
<feature type="binding site" evidence="1">
    <location>
        <position position="174"/>
    </location>
    <ligand>
        <name>L-aspartate</name>
        <dbReference type="ChEBI" id="CHEBI:29991"/>
    </ligand>
</feature>
<feature type="binding site" evidence="1">
    <location>
        <begin position="220"/>
        <end position="222"/>
    </location>
    <ligand>
        <name>ATP</name>
        <dbReference type="ChEBI" id="CHEBI:30616"/>
    </ligand>
</feature>
<feature type="binding site" evidence="1">
    <location>
        <position position="220"/>
    </location>
    <ligand>
        <name>L-aspartate</name>
        <dbReference type="ChEBI" id="CHEBI:29991"/>
    </ligand>
</feature>
<feature type="binding site" evidence="1">
    <location>
        <position position="229"/>
    </location>
    <ligand>
        <name>ATP</name>
        <dbReference type="ChEBI" id="CHEBI:30616"/>
    </ligand>
</feature>
<feature type="binding site" evidence="1">
    <location>
        <position position="450"/>
    </location>
    <ligand>
        <name>L-aspartate</name>
        <dbReference type="ChEBI" id="CHEBI:29991"/>
    </ligand>
</feature>
<feature type="binding site" evidence="1">
    <location>
        <position position="483"/>
    </location>
    <ligand>
        <name>ATP</name>
        <dbReference type="ChEBI" id="CHEBI:30616"/>
    </ligand>
</feature>
<feature type="binding site" evidence="1">
    <location>
        <position position="490"/>
    </location>
    <ligand>
        <name>L-aspartate</name>
        <dbReference type="ChEBI" id="CHEBI:29991"/>
    </ligand>
</feature>
<feature type="binding site" evidence="1">
    <location>
        <begin position="535"/>
        <end position="538"/>
    </location>
    <ligand>
        <name>ATP</name>
        <dbReference type="ChEBI" id="CHEBI:30616"/>
    </ligand>
</feature>
<feature type="site" description="Important for tRNA non-discrimination" evidence="1">
    <location>
        <position position="31"/>
    </location>
</feature>
<feature type="site" description="Important for tRNA non-discrimination" evidence="1">
    <location>
        <position position="82"/>
    </location>
</feature>
<sequence length="591" mass="66262">MMRSHYCGQLNETLEGQEITLCGWVHRRRDHGGVIFLDIRDRDGLAQVVFDPDRAESFAAADRVRSEYVVKITGKVRLRPAGAVNKNMASGGIEVLGYELEVLNESETPPFPLNEYSDVGEETRLRYRFLDLRRPEMAEKLRLRSRMTTSIRRFLDENGFLDVETPILTRATPEGARDYLVPSRTHAGSFFALPQSPQLFKQLLMVAGFDRYYQIAKCFRDEDLRADRQPEFTQIDIETSFLDEKEIMGLTEQMIRNLFKEVLDLEFGDFPHMTFEEAMRRYGSDKPDLRNPLELVDVADQLKDVDFKVFSGPANDPKCRIAALRVPGGASMPRKQIDDYTKFVGIYGAKGLAYIKVNERANGVDGLQSPIVKNIPLDNLNAILDRVGAVDGDIVFFGADKAKIVSEALGALRIKLGHDLNLLTCEWAPMWVVDFPMFEENDDGSFSALHHPFTAPKCSPAELEANPAGALSRAYDMVLNGTELGGGSIRIHRKEMQQAVFRLLGINEAEQEEKFGFLLDALKYGAPPHGGLAFGLDRLVMLMTGAQSIREVIAFPKTQSAADVMTQAPGVVDAKALRELHIRLRETPKAE</sequence>
<dbReference type="EC" id="6.1.1.23" evidence="1"/>
<dbReference type="EMBL" id="AM181176">
    <property type="protein sequence ID" value="CAY51826.1"/>
    <property type="molecule type" value="Genomic_DNA"/>
</dbReference>
<dbReference type="RefSeq" id="WP_015885614.1">
    <property type="nucleotide sequence ID" value="NC_012660.1"/>
</dbReference>
<dbReference type="SMR" id="C3JYT1"/>
<dbReference type="STRING" id="294.SRM1_04348"/>
<dbReference type="GeneID" id="93466531"/>
<dbReference type="eggNOG" id="COG0173">
    <property type="taxonomic scope" value="Bacteria"/>
</dbReference>
<dbReference type="HOGENOM" id="CLU_014330_3_2_6"/>
<dbReference type="OrthoDB" id="9802326at2"/>
<dbReference type="GO" id="GO:0005737">
    <property type="term" value="C:cytoplasm"/>
    <property type="evidence" value="ECO:0007669"/>
    <property type="project" value="UniProtKB-SubCell"/>
</dbReference>
<dbReference type="GO" id="GO:0004815">
    <property type="term" value="F:aspartate-tRNA ligase activity"/>
    <property type="evidence" value="ECO:0007669"/>
    <property type="project" value="UniProtKB-UniRule"/>
</dbReference>
<dbReference type="GO" id="GO:0050560">
    <property type="term" value="F:aspartate-tRNA(Asn) ligase activity"/>
    <property type="evidence" value="ECO:0007669"/>
    <property type="project" value="UniProtKB-EC"/>
</dbReference>
<dbReference type="GO" id="GO:0005524">
    <property type="term" value="F:ATP binding"/>
    <property type="evidence" value="ECO:0007669"/>
    <property type="project" value="UniProtKB-UniRule"/>
</dbReference>
<dbReference type="GO" id="GO:0003676">
    <property type="term" value="F:nucleic acid binding"/>
    <property type="evidence" value="ECO:0007669"/>
    <property type="project" value="InterPro"/>
</dbReference>
<dbReference type="GO" id="GO:0006422">
    <property type="term" value="P:aspartyl-tRNA aminoacylation"/>
    <property type="evidence" value="ECO:0007669"/>
    <property type="project" value="UniProtKB-UniRule"/>
</dbReference>
<dbReference type="CDD" id="cd00777">
    <property type="entry name" value="AspRS_core"/>
    <property type="match status" value="1"/>
</dbReference>
<dbReference type="CDD" id="cd04317">
    <property type="entry name" value="EcAspRS_like_N"/>
    <property type="match status" value="1"/>
</dbReference>
<dbReference type="Gene3D" id="3.30.930.10">
    <property type="entry name" value="Bira Bifunctional Protein, Domain 2"/>
    <property type="match status" value="1"/>
</dbReference>
<dbReference type="Gene3D" id="3.30.1360.30">
    <property type="entry name" value="GAD-like domain"/>
    <property type="match status" value="1"/>
</dbReference>
<dbReference type="Gene3D" id="2.40.50.140">
    <property type="entry name" value="Nucleic acid-binding proteins"/>
    <property type="match status" value="1"/>
</dbReference>
<dbReference type="HAMAP" id="MF_00044">
    <property type="entry name" value="Asp_tRNA_synth_type1"/>
    <property type="match status" value="1"/>
</dbReference>
<dbReference type="InterPro" id="IPR004364">
    <property type="entry name" value="Aa-tRNA-synt_II"/>
</dbReference>
<dbReference type="InterPro" id="IPR006195">
    <property type="entry name" value="aa-tRNA-synth_II"/>
</dbReference>
<dbReference type="InterPro" id="IPR045864">
    <property type="entry name" value="aa-tRNA-synth_II/BPL/LPL"/>
</dbReference>
<dbReference type="InterPro" id="IPR004524">
    <property type="entry name" value="Asp-tRNA-ligase_1"/>
</dbReference>
<dbReference type="InterPro" id="IPR047089">
    <property type="entry name" value="Asp-tRNA-ligase_1_N"/>
</dbReference>
<dbReference type="InterPro" id="IPR002312">
    <property type="entry name" value="Asp/Asn-tRNA-synth_IIb"/>
</dbReference>
<dbReference type="InterPro" id="IPR047090">
    <property type="entry name" value="AspRS_core"/>
</dbReference>
<dbReference type="InterPro" id="IPR004115">
    <property type="entry name" value="GAD-like_sf"/>
</dbReference>
<dbReference type="InterPro" id="IPR029351">
    <property type="entry name" value="GAD_dom"/>
</dbReference>
<dbReference type="InterPro" id="IPR012340">
    <property type="entry name" value="NA-bd_OB-fold"/>
</dbReference>
<dbReference type="InterPro" id="IPR004365">
    <property type="entry name" value="NA-bd_OB_tRNA"/>
</dbReference>
<dbReference type="NCBIfam" id="TIGR00459">
    <property type="entry name" value="aspS_bact"/>
    <property type="match status" value="1"/>
</dbReference>
<dbReference type="NCBIfam" id="NF001750">
    <property type="entry name" value="PRK00476.1"/>
    <property type="match status" value="1"/>
</dbReference>
<dbReference type="PANTHER" id="PTHR22594:SF5">
    <property type="entry name" value="ASPARTATE--TRNA LIGASE, MITOCHONDRIAL"/>
    <property type="match status" value="1"/>
</dbReference>
<dbReference type="PANTHER" id="PTHR22594">
    <property type="entry name" value="ASPARTYL/LYSYL-TRNA SYNTHETASE"/>
    <property type="match status" value="1"/>
</dbReference>
<dbReference type="Pfam" id="PF02938">
    <property type="entry name" value="GAD"/>
    <property type="match status" value="1"/>
</dbReference>
<dbReference type="Pfam" id="PF00152">
    <property type="entry name" value="tRNA-synt_2"/>
    <property type="match status" value="1"/>
</dbReference>
<dbReference type="Pfam" id="PF01336">
    <property type="entry name" value="tRNA_anti-codon"/>
    <property type="match status" value="1"/>
</dbReference>
<dbReference type="PRINTS" id="PR01042">
    <property type="entry name" value="TRNASYNTHASP"/>
</dbReference>
<dbReference type="SUPFAM" id="SSF55681">
    <property type="entry name" value="Class II aaRS and biotin synthetases"/>
    <property type="match status" value="1"/>
</dbReference>
<dbReference type="SUPFAM" id="SSF55261">
    <property type="entry name" value="GAD domain-like"/>
    <property type="match status" value="1"/>
</dbReference>
<dbReference type="SUPFAM" id="SSF50249">
    <property type="entry name" value="Nucleic acid-binding proteins"/>
    <property type="match status" value="1"/>
</dbReference>
<dbReference type="PROSITE" id="PS50862">
    <property type="entry name" value="AA_TRNA_LIGASE_II"/>
    <property type="match status" value="1"/>
</dbReference>
<protein>
    <recommendedName>
        <fullName evidence="1">Aspartate--tRNA(Asp/Asn) ligase</fullName>
        <ecNumber evidence="1">6.1.1.23</ecNumber>
    </recommendedName>
    <alternativeName>
        <fullName evidence="1">Aspartyl-tRNA synthetase</fullName>
        <shortName evidence="1">AspRS</shortName>
    </alternativeName>
    <alternativeName>
        <fullName evidence="1">Non-discriminating aspartyl-tRNA synthetase</fullName>
        <shortName evidence="1">ND-AspRS</shortName>
    </alternativeName>
</protein>
<organism>
    <name type="scientific">Pseudomonas fluorescens (strain SBW25)</name>
    <dbReference type="NCBI Taxonomy" id="216595"/>
    <lineage>
        <taxon>Bacteria</taxon>
        <taxon>Pseudomonadati</taxon>
        <taxon>Pseudomonadota</taxon>
        <taxon>Gammaproteobacteria</taxon>
        <taxon>Pseudomonadales</taxon>
        <taxon>Pseudomonadaceae</taxon>
        <taxon>Pseudomonas</taxon>
    </lineage>
</organism>
<keyword id="KW-0030">Aminoacyl-tRNA synthetase</keyword>
<keyword id="KW-0067">ATP-binding</keyword>
<keyword id="KW-0963">Cytoplasm</keyword>
<keyword id="KW-0436">Ligase</keyword>
<keyword id="KW-0547">Nucleotide-binding</keyword>
<keyword id="KW-0648">Protein biosynthesis</keyword>
<proteinExistence type="inferred from homology"/>
<evidence type="ECO:0000255" key="1">
    <source>
        <dbReference type="HAMAP-Rule" id="MF_00044"/>
    </source>
</evidence>